<feature type="chain" id="PRO_0000304031" description="Uncharacterized membrane protein P22H7.04">
    <location>
        <begin position="1"/>
        <end position="255"/>
    </location>
</feature>
<feature type="transmembrane region" description="Helical" evidence="1">
    <location>
        <begin position="99"/>
        <end position="119"/>
    </location>
</feature>
<feature type="transmembrane region" description="Helical" evidence="1">
    <location>
        <begin position="146"/>
        <end position="166"/>
    </location>
</feature>
<organism>
    <name type="scientific">Schizosaccharomyces pombe (strain 972 / ATCC 24843)</name>
    <name type="common">Fission yeast</name>
    <dbReference type="NCBI Taxonomy" id="284812"/>
    <lineage>
        <taxon>Eukaryota</taxon>
        <taxon>Fungi</taxon>
        <taxon>Dikarya</taxon>
        <taxon>Ascomycota</taxon>
        <taxon>Taphrinomycotina</taxon>
        <taxon>Schizosaccharomycetes</taxon>
        <taxon>Schizosaccharomycetales</taxon>
        <taxon>Schizosaccharomycetaceae</taxon>
        <taxon>Schizosaccharomyces</taxon>
    </lineage>
</organism>
<keyword id="KW-0472">Membrane</keyword>
<keyword id="KW-0496">Mitochondrion</keyword>
<keyword id="KW-1185">Reference proteome</keyword>
<keyword id="KW-0812">Transmembrane</keyword>
<keyword id="KW-1133">Transmembrane helix</keyword>
<proteinExistence type="predicted"/>
<gene>
    <name type="ORF">pi027</name>
    <name type="ORF">SPBP22H7.04</name>
</gene>
<dbReference type="EMBL" id="AB004535">
    <property type="protein sequence ID" value="BAA21406.1"/>
    <property type="status" value="ALT_INIT"/>
    <property type="molecule type" value="Genomic_DNA"/>
</dbReference>
<dbReference type="EMBL" id="CU329671">
    <property type="protein sequence ID" value="CAC37372.1"/>
    <property type="molecule type" value="Genomic_DNA"/>
</dbReference>
<dbReference type="RefSeq" id="NP_595601.1">
    <property type="nucleotide sequence ID" value="NM_001021496.2"/>
</dbReference>
<dbReference type="PaxDb" id="4896-SPBP22H7.04.1"/>
<dbReference type="EnsemblFungi" id="SPBP22H7.04.1">
    <property type="protein sequence ID" value="SPBP22H7.04.1:pep"/>
    <property type="gene ID" value="SPBP22H7.04"/>
</dbReference>
<dbReference type="PomBase" id="SPBP22H7.04"/>
<dbReference type="VEuPathDB" id="FungiDB:SPBP22H7.04"/>
<dbReference type="HOGENOM" id="CLU_1090532_0_0_1"/>
<dbReference type="InParanoid" id="Q9C0W3"/>
<dbReference type="OMA" id="DEIFANW"/>
<dbReference type="PRO" id="PR:Q9C0W3"/>
<dbReference type="Proteomes" id="UP000002485">
    <property type="component" value="Chromosome II"/>
</dbReference>
<dbReference type="GO" id="GO:0031966">
    <property type="term" value="C:mitochondrial membrane"/>
    <property type="evidence" value="ECO:0007669"/>
    <property type="project" value="UniProtKB-SubCell"/>
</dbReference>
<dbReference type="GO" id="GO:0005739">
    <property type="term" value="C:mitochondrion"/>
    <property type="evidence" value="ECO:0007005"/>
    <property type="project" value="PomBase"/>
</dbReference>
<dbReference type="InterPro" id="IPR045325">
    <property type="entry name" value="TMEM70/TMEM186/TMEM223"/>
</dbReference>
<dbReference type="Pfam" id="PF06979">
    <property type="entry name" value="TMEM70"/>
    <property type="match status" value="1"/>
</dbReference>
<name>YHI4_SCHPO</name>
<evidence type="ECO:0000255" key="1"/>
<evidence type="ECO:0000269" key="2">
    <source>
    </source>
</evidence>
<evidence type="ECO:0000305" key="3"/>
<sequence>MSMLIFNIRVARHKALLSRIVSTNMFNPMFRSLRPIQKSFSEISILRVFNKPPIKKFHNSNILKDITSKRNATPAKIAWQAMTTREPFLVYQAKADKKISLIYLLTVGMLINVCVITSFASVDIYRAKDEIFANWVDMDYYEKLSYIGSAFITPALYFTLTLILFLPRRNIYSISTLPSQRFEIVTGFLSPFNKLYFSKSLIVPRKDVSIVTYSLQKNPITLKIRDRPFYYLLNANGKYAGNSKDVLFCVIGNRY</sequence>
<comment type="subcellular location">
    <subcellularLocation>
        <location evidence="2">Mitochondrion membrane</location>
        <topology evidence="2">Multi-pass membrane protein</topology>
    </subcellularLocation>
</comment>
<comment type="sequence caution" evidence="3">
    <conflict type="erroneous initiation">
        <sequence resource="EMBL-CDS" id="BAA21406"/>
    </conflict>
</comment>
<accession>Q9C0W3</accession>
<accession>O13618</accession>
<protein>
    <recommendedName>
        <fullName>Uncharacterized membrane protein P22H7.04</fullName>
    </recommendedName>
</protein>
<reference key="1">
    <citation type="journal article" date="2000" name="Yeast">
        <title>A 38 kb segment containing the cdc2 gene from the left arm of fission yeast chromosome II: sequence analysis and characterization of the genomic DNA and cDNAs encoded on the segment.</title>
        <authorList>
            <person name="Machida M."/>
            <person name="Yamazaki S."/>
            <person name="Kunihiro S."/>
            <person name="Tanaka T."/>
            <person name="Kushida N."/>
            <person name="Jinno K."/>
            <person name="Haikawa Y."/>
            <person name="Yamazaki J."/>
            <person name="Yamamoto S."/>
            <person name="Sekine M."/>
            <person name="Oguchi A."/>
            <person name="Nagai Y."/>
            <person name="Sakai M."/>
            <person name="Aoki K."/>
            <person name="Ogura K."/>
            <person name="Kudoh Y."/>
            <person name="Kikuchi H."/>
            <person name="Zhang M.Q."/>
            <person name="Yanagida M."/>
        </authorList>
    </citation>
    <scope>NUCLEOTIDE SEQUENCE [LARGE SCALE GENOMIC DNA]</scope>
    <source>
        <strain>972 / ATCC 24843</strain>
    </source>
</reference>
<reference key="2">
    <citation type="journal article" date="2002" name="Nature">
        <title>The genome sequence of Schizosaccharomyces pombe.</title>
        <authorList>
            <person name="Wood V."/>
            <person name="Gwilliam R."/>
            <person name="Rajandream M.A."/>
            <person name="Lyne M.H."/>
            <person name="Lyne R."/>
            <person name="Stewart A."/>
            <person name="Sgouros J.G."/>
            <person name="Peat N."/>
            <person name="Hayles J."/>
            <person name="Baker S.G."/>
            <person name="Basham D."/>
            <person name="Bowman S."/>
            <person name="Brooks K."/>
            <person name="Brown D."/>
            <person name="Brown S."/>
            <person name="Chillingworth T."/>
            <person name="Churcher C.M."/>
            <person name="Collins M."/>
            <person name="Connor R."/>
            <person name="Cronin A."/>
            <person name="Davis P."/>
            <person name="Feltwell T."/>
            <person name="Fraser A."/>
            <person name="Gentles S."/>
            <person name="Goble A."/>
            <person name="Hamlin N."/>
            <person name="Harris D.E."/>
            <person name="Hidalgo J."/>
            <person name="Hodgson G."/>
            <person name="Holroyd S."/>
            <person name="Hornsby T."/>
            <person name="Howarth S."/>
            <person name="Huckle E.J."/>
            <person name="Hunt S."/>
            <person name="Jagels K."/>
            <person name="James K.D."/>
            <person name="Jones L."/>
            <person name="Jones M."/>
            <person name="Leather S."/>
            <person name="McDonald S."/>
            <person name="McLean J."/>
            <person name="Mooney P."/>
            <person name="Moule S."/>
            <person name="Mungall K.L."/>
            <person name="Murphy L.D."/>
            <person name="Niblett D."/>
            <person name="Odell C."/>
            <person name="Oliver K."/>
            <person name="O'Neil S."/>
            <person name="Pearson D."/>
            <person name="Quail M.A."/>
            <person name="Rabbinowitsch E."/>
            <person name="Rutherford K.M."/>
            <person name="Rutter S."/>
            <person name="Saunders D."/>
            <person name="Seeger K."/>
            <person name="Sharp S."/>
            <person name="Skelton J."/>
            <person name="Simmonds M.N."/>
            <person name="Squares R."/>
            <person name="Squares S."/>
            <person name="Stevens K."/>
            <person name="Taylor K."/>
            <person name="Taylor R.G."/>
            <person name="Tivey A."/>
            <person name="Walsh S.V."/>
            <person name="Warren T."/>
            <person name="Whitehead S."/>
            <person name="Woodward J.R."/>
            <person name="Volckaert G."/>
            <person name="Aert R."/>
            <person name="Robben J."/>
            <person name="Grymonprez B."/>
            <person name="Weltjens I."/>
            <person name="Vanstreels E."/>
            <person name="Rieger M."/>
            <person name="Schaefer M."/>
            <person name="Mueller-Auer S."/>
            <person name="Gabel C."/>
            <person name="Fuchs M."/>
            <person name="Duesterhoeft A."/>
            <person name="Fritzc C."/>
            <person name="Holzer E."/>
            <person name="Moestl D."/>
            <person name="Hilbert H."/>
            <person name="Borzym K."/>
            <person name="Langer I."/>
            <person name="Beck A."/>
            <person name="Lehrach H."/>
            <person name="Reinhardt R."/>
            <person name="Pohl T.M."/>
            <person name="Eger P."/>
            <person name="Zimmermann W."/>
            <person name="Wedler H."/>
            <person name="Wambutt R."/>
            <person name="Purnelle B."/>
            <person name="Goffeau A."/>
            <person name="Cadieu E."/>
            <person name="Dreano S."/>
            <person name="Gloux S."/>
            <person name="Lelaure V."/>
            <person name="Mottier S."/>
            <person name="Galibert F."/>
            <person name="Aves S.J."/>
            <person name="Xiang Z."/>
            <person name="Hunt C."/>
            <person name="Moore K."/>
            <person name="Hurst S.M."/>
            <person name="Lucas M."/>
            <person name="Rochet M."/>
            <person name="Gaillardin C."/>
            <person name="Tallada V.A."/>
            <person name="Garzon A."/>
            <person name="Thode G."/>
            <person name="Daga R.R."/>
            <person name="Cruzado L."/>
            <person name="Jimenez J."/>
            <person name="Sanchez M."/>
            <person name="del Rey F."/>
            <person name="Benito J."/>
            <person name="Dominguez A."/>
            <person name="Revuelta J.L."/>
            <person name="Moreno S."/>
            <person name="Armstrong J."/>
            <person name="Forsburg S.L."/>
            <person name="Cerutti L."/>
            <person name="Lowe T."/>
            <person name="McCombie W.R."/>
            <person name="Paulsen I."/>
            <person name="Potashkin J."/>
            <person name="Shpakovski G.V."/>
            <person name="Ussery D."/>
            <person name="Barrell B.G."/>
            <person name="Nurse P."/>
        </authorList>
    </citation>
    <scope>NUCLEOTIDE SEQUENCE [LARGE SCALE GENOMIC DNA]</scope>
    <source>
        <strain>972 / ATCC 24843</strain>
    </source>
</reference>
<reference key="3">
    <citation type="journal article" date="2006" name="Nat. Biotechnol.">
        <title>ORFeome cloning and global analysis of protein localization in the fission yeast Schizosaccharomyces pombe.</title>
        <authorList>
            <person name="Matsuyama A."/>
            <person name="Arai R."/>
            <person name="Yashiroda Y."/>
            <person name="Shirai A."/>
            <person name="Kamata A."/>
            <person name="Sekido S."/>
            <person name="Kobayashi Y."/>
            <person name="Hashimoto A."/>
            <person name="Hamamoto M."/>
            <person name="Hiraoka Y."/>
            <person name="Horinouchi S."/>
            <person name="Yoshida M."/>
        </authorList>
    </citation>
    <scope>SUBCELLULAR LOCATION [LARGE SCALE ANALYSIS]</scope>
</reference>